<gene>
    <name type="primary">pter</name>
    <name type="ORF">si:ch211-261f3.2</name>
    <name type="ORF">zgc:153666</name>
</gene>
<feature type="chain" id="PRO_0000388667" description="N-acetyltaurine hydrolase">
    <location>
        <begin position="1"/>
        <end position="349"/>
    </location>
</feature>
<feature type="binding site" evidence="1">
    <location>
        <position position="26"/>
    </location>
    <ligand>
        <name>a divalent metal cation</name>
        <dbReference type="ChEBI" id="CHEBI:60240"/>
        <label>1</label>
    </ligand>
</feature>
<feature type="binding site" evidence="1">
    <location>
        <position position="28"/>
    </location>
    <ligand>
        <name>a divalent metal cation</name>
        <dbReference type="ChEBI" id="CHEBI:60240"/>
        <label>1</label>
    </ligand>
</feature>
<feature type="binding site" evidence="1">
    <location>
        <position position="169"/>
    </location>
    <ligand>
        <name>a divalent metal cation</name>
        <dbReference type="ChEBI" id="CHEBI:60240"/>
        <label>1</label>
    </ligand>
</feature>
<feature type="binding site" evidence="1">
    <location>
        <position position="169"/>
    </location>
    <ligand>
        <name>a divalent metal cation</name>
        <dbReference type="ChEBI" id="CHEBI:60240"/>
        <label>2</label>
    </ligand>
</feature>
<feature type="binding site" evidence="1">
    <location>
        <position position="201"/>
    </location>
    <ligand>
        <name>a divalent metal cation</name>
        <dbReference type="ChEBI" id="CHEBI:60240"/>
        <label>2</label>
    </ligand>
</feature>
<feature type="binding site" evidence="1">
    <location>
        <position position="230"/>
    </location>
    <ligand>
        <name>a divalent metal cation</name>
        <dbReference type="ChEBI" id="CHEBI:60240"/>
        <label>2</label>
    </ligand>
</feature>
<feature type="binding site" evidence="1">
    <location>
        <position position="298"/>
    </location>
    <ligand>
        <name>a divalent metal cation</name>
        <dbReference type="ChEBI" id="CHEBI:60240"/>
        <label>1</label>
    </ligand>
</feature>
<feature type="sequence conflict" description="In Ref. 1; CAM14163." evidence="5" ref="1">
    <original>R</original>
    <variation>K</variation>
    <location>
        <position position="207"/>
    </location>
</feature>
<feature type="sequence conflict" description="In Ref. 1; CAM14163." evidence="5" ref="1">
    <original>C</original>
    <variation>R</variation>
    <location>
        <position position="267"/>
    </location>
</feature>
<keyword id="KW-0963">Cytoplasm</keyword>
<keyword id="KW-0378">Hydrolase</keyword>
<keyword id="KW-0479">Metal-binding</keyword>
<keyword id="KW-1185">Reference proteome</keyword>
<dbReference type="EC" id="3.1.-.-" evidence="2"/>
<dbReference type="EMBL" id="BX928742">
    <property type="protein sequence ID" value="CAM14163.1"/>
    <property type="status" value="ALT_INIT"/>
    <property type="molecule type" value="Genomic_DNA"/>
</dbReference>
<dbReference type="EMBL" id="BC122370">
    <property type="protein sequence ID" value="AAI22371.1"/>
    <property type="molecule type" value="mRNA"/>
</dbReference>
<dbReference type="SMR" id="Q0P3Z2"/>
<dbReference type="FunCoup" id="Q0P3Z2">
    <property type="interactions" value="81"/>
</dbReference>
<dbReference type="STRING" id="7955.ENSDARP00000099334"/>
<dbReference type="PaxDb" id="7955-ENSDARP00000121623"/>
<dbReference type="AGR" id="ZFIN:ZDB-GENE-060825-190"/>
<dbReference type="ZFIN" id="ZDB-GENE-060825-190">
    <property type="gene designation" value="pter"/>
</dbReference>
<dbReference type="eggNOG" id="ENOG502QQQR">
    <property type="taxonomic scope" value="Eukaryota"/>
</dbReference>
<dbReference type="InParanoid" id="Q0P3Z2"/>
<dbReference type="PhylomeDB" id="Q0P3Z2"/>
<dbReference type="TreeFam" id="TF323205"/>
<dbReference type="PRO" id="PR:Q0P3Z2"/>
<dbReference type="Proteomes" id="UP000000437">
    <property type="component" value="Unplaced"/>
</dbReference>
<dbReference type="GO" id="GO:0005829">
    <property type="term" value="C:cytosol"/>
    <property type="evidence" value="ECO:0000250"/>
    <property type="project" value="UniProtKB"/>
</dbReference>
<dbReference type="GO" id="GO:0141215">
    <property type="term" value="F:N-acetyltaurine hydrolase activity"/>
    <property type="evidence" value="ECO:0000250"/>
    <property type="project" value="UniProtKB"/>
</dbReference>
<dbReference type="GO" id="GO:0008270">
    <property type="term" value="F:zinc ion binding"/>
    <property type="evidence" value="ECO:0007669"/>
    <property type="project" value="InterPro"/>
</dbReference>
<dbReference type="GO" id="GO:0009056">
    <property type="term" value="P:catabolic process"/>
    <property type="evidence" value="ECO:0007669"/>
    <property type="project" value="InterPro"/>
</dbReference>
<dbReference type="GO" id="GO:0032098">
    <property type="term" value="P:regulation of appetite"/>
    <property type="evidence" value="ECO:0000250"/>
    <property type="project" value="UniProtKB"/>
</dbReference>
<dbReference type="GO" id="GO:0019530">
    <property type="term" value="P:taurine metabolic process"/>
    <property type="evidence" value="ECO:0000250"/>
    <property type="project" value="UniProtKB"/>
</dbReference>
<dbReference type="CDD" id="cd00530">
    <property type="entry name" value="PTE"/>
    <property type="match status" value="1"/>
</dbReference>
<dbReference type="Gene3D" id="3.20.20.140">
    <property type="entry name" value="Metal-dependent hydrolases"/>
    <property type="match status" value="1"/>
</dbReference>
<dbReference type="InterPro" id="IPR032466">
    <property type="entry name" value="Metal_Hydrolase"/>
</dbReference>
<dbReference type="InterPro" id="IPR001559">
    <property type="entry name" value="Phosphotriesterase"/>
</dbReference>
<dbReference type="PANTHER" id="PTHR10819">
    <property type="entry name" value="PHOSPHOTRIESTERASE-RELATED"/>
    <property type="match status" value="1"/>
</dbReference>
<dbReference type="PANTHER" id="PTHR10819:SF3">
    <property type="entry name" value="PHOSPHOTRIESTERASE-RELATED PROTEIN"/>
    <property type="match status" value="1"/>
</dbReference>
<dbReference type="Pfam" id="PF02126">
    <property type="entry name" value="PTE"/>
    <property type="match status" value="1"/>
</dbReference>
<dbReference type="PIRSF" id="PIRSF016839">
    <property type="entry name" value="PhP"/>
    <property type="match status" value="1"/>
</dbReference>
<dbReference type="SUPFAM" id="SSF51556">
    <property type="entry name" value="Metallo-dependent hydrolases"/>
    <property type="match status" value="1"/>
</dbReference>
<dbReference type="PROSITE" id="PS51347">
    <property type="entry name" value="PHOSPHOTRIESTERASE_2"/>
    <property type="match status" value="1"/>
</dbReference>
<accession>Q0P3Z2</accession>
<accession>A2BII3</accession>
<protein>
    <recommendedName>
        <fullName evidence="5">N-acetyltaurine hydrolase</fullName>
        <ecNumber evidence="2">3.1.-.-</ecNumber>
    </recommendedName>
    <alternativeName>
        <fullName evidence="2">Phosphotriesterase-related protein</fullName>
    </alternativeName>
</protein>
<organism>
    <name type="scientific">Danio rerio</name>
    <name type="common">Zebrafish</name>
    <name type="synonym">Brachydanio rerio</name>
    <dbReference type="NCBI Taxonomy" id="7955"/>
    <lineage>
        <taxon>Eukaryota</taxon>
        <taxon>Metazoa</taxon>
        <taxon>Chordata</taxon>
        <taxon>Craniata</taxon>
        <taxon>Vertebrata</taxon>
        <taxon>Euteleostomi</taxon>
        <taxon>Actinopterygii</taxon>
        <taxon>Neopterygii</taxon>
        <taxon>Teleostei</taxon>
        <taxon>Ostariophysi</taxon>
        <taxon>Cypriniformes</taxon>
        <taxon>Danionidae</taxon>
        <taxon>Danioninae</taxon>
        <taxon>Danio</taxon>
    </lineage>
</organism>
<name>PTER_DANRE</name>
<reference key="1">
    <citation type="journal article" date="2013" name="Nature">
        <title>The zebrafish reference genome sequence and its relationship to the human genome.</title>
        <authorList>
            <person name="Howe K."/>
            <person name="Clark M.D."/>
            <person name="Torroja C.F."/>
            <person name="Torrance J."/>
            <person name="Berthelot C."/>
            <person name="Muffato M."/>
            <person name="Collins J.E."/>
            <person name="Humphray S."/>
            <person name="McLaren K."/>
            <person name="Matthews L."/>
            <person name="McLaren S."/>
            <person name="Sealy I."/>
            <person name="Caccamo M."/>
            <person name="Churcher C."/>
            <person name="Scott C."/>
            <person name="Barrett J.C."/>
            <person name="Koch R."/>
            <person name="Rauch G.J."/>
            <person name="White S."/>
            <person name="Chow W."/>
            <person name="Kilian B."/>
            <person name="Quintais L.T."/>
            <person name="Guerra-Assuncao J.A."/>
            <person name="Zhou Y."/>
            <person name="Gu Y."/>
            <person name="Yen J."/>
            <person name="Vogel J.H."/>
            <person name="Eyre T."/>
            <person name="Redmond S."/>
            <person name="Banerjee R."/>
            <person name="Chi J."/>
            <person name="Fu B."/>
            <person name="Langley E."/>
            <person name="Maguire S.F."/>
            <person name="Laird G.K."/>
            <person name="Lloyd D."/>
            <person name="Kenyon E."/>
            <person name="Donaldson S."/>
            <person name="Sehra H."/>
            <person name="Almeida-King J."/>
            <person name="Loveland J."/>
            <person name="Trevanion S."/>
            <person name="Jones M."/>
            <person name="Quail M."/>
            <person name="Willey D."/>
            <person name="Hunt A."/>
            <person name="Burton J."/>
            <person name="Sims S."/>
            <person name="McLay K."/>
            <person name="Plumb B."/>
            <person name="Davis J."/>
            <person name="Clee C."/>
            <person name="Oliver K."/>
            <person name="Clark R."/>
            <person name="Riddle C."/>
            <person name="Elliot D."/>
            <person name="Threadgold G."/>
            <person name="Harden G."/>
            <person name="Ware D."/>
            <person name="Begum S."/>
            <person name="Mortimore B."/>
            <person name="Kerry G."/>
            <person name="Heath P."/>
            <person name="Phillimore B."/>
            <person name="Tracey A."/>
            <person name="Corby N."/>
            <person name="Dunn M."/>
            <person name="Johnson C."/>
            <person name="Wood J."/>
            <person name="Clark S."/>
            <person name="Pelan S."/>
            <person name="Griffiths G."/>
            <person name="Smith M."/>
            <person name="Glithero R."/>
            <person name="Howden P."/>
            <person name="Barker N."/>
            <person name="Lloyd C."/>
            <person name="Stevens C."/>
            <person name="Harley J."/>
            <person name="Holt K."/>
            <person name="Panagiotidis G."/>
            <person name="Lovell J."/>
            <person name="Beasley H."/>
            <person name="Henderson C."/>
            <person name="Gordon D."/>
            <person name="Auger K."/>
            <person name="Wright D."/>
            <person name="Collins J."/>
            <person name="Raisen C."/>
            <person name="Dyer L."/>
            <person name="Leung K."/>
            <person name="Robertson L."/>
            <person name="Ambridge K."/>
            <person name="Leongamornlert D."/>
            <person name="McGuire S."/>
            <person name="Gilderthorp R."/>
            <person name="Griffiths C."/>
            <person name="Manthravadi D."/>
            <person name="Nichol S."/>
            <person name="Barker G."/>
            <person name="Whitehead S."/>
            <person name="Kay M."/>
            <person name="Brown J."/>
            <person name="Murnane C."/>
            <person name="Gray E."/>
            <person name="Humphries M."/>
            <person name="Sycamore N."/>
            <person name="Barker D."/>
            <person name="Saunders D."/>
            <person name="Wallis J."/>
            <person name="Babbage A."/>
            <person name="Hammond S."/>
            <person name="Mashreghi-Mohammadi M."/>
            <person name="Barr L."/>
            <person name="Martin S."/>
            <person name="Wray P."/>
            <person name="Ellington A."/>
            <person name="Matthews N."/>
            <person name="Ellwood M."/>
            <person name="Woodmansey R."/>
            <person name="Clark G."/>
            <person name="Cooper J."/>
            <person name="Tromans A."/>
            <person name="Grafham D."/>
            <person name="Skuce C."/>
            <person name="Pandian R."/>
            <person name="Andrews R."/>
            <person name="Harrison E."/>
            <person name="Kimberley A."/>
            <person name="Garnett J."/>
            <person name="Fosker N."/>
            <person name="Hall R."/>
            <person name="Garner P."/>
            <person name="Kelly D."/>
            <person name="Bird C."/>
            <person name="Palmer S."/>
            <person name="Gehring I."/>
            <person name="Berger A."/>
            <person name="Dooley C.M."/>
            <person name="Ersan-Urun Z."/>
            <person name="Eser C."/>
            <person name="Geiger H."/>
            <person name="Geisler M."/>
            <person name="Karotki L."/>
            <person name="Kirn A."/>
            <person name="Konantz J."/>
            <person name="Konantz M."/>
            <person name="Oberlander M."/>
            <person name="Rudolph-Geiger S."/>
            <person name="Teucke M."/>
            <person name="Lanz C."/>
            <person name="Raddatz G."/>
            <person name="Osoegawa K."/>
            <person name="Zhu B."/>
            <person name="Rapp A."/>
            <person name="Widaa S."/>
            <person name="Langford C."/>
            <person name="Yang F."/>
            <person name="Schuster S.C."/>
            <person name="Carter N.P."/>
            <person name="Harrow J."/>
            <person name="Ning Z."/>
            <person name="Herrero J."/>
            <person name="Searle S.M."/>
            <person name="Enright A."/>
            <person name="Geisler R."/>
            <person name="Plasterk R.H."/>
            <person name="Lee C."/>
            <person name="Westerfield M."/>
            <person name="de Jong P.J."/>
            <person name="Zon L.I."/>
            <person name="Postlethwait J.H."/>
            <person name="Nusslein-Volhard C."/>
            <person name="Hubbard T.J."/>
            <person name="Roest Crollius H."/>
            <person name="Rogers J."/>
            <person name="Stemple D.L."/>
        </authorList>
    </citation>
    <scope>NUCLEOTIDE SEQUENCE [LARGE SCALE GENOMIC DNA]</scope>
    <source>
        <strain>Tuebingen</strain>
    </source>
</reference>
<reference key="2">
    <citation type="submission" date="2006-08" db="EMBL/GenBank/DDBJ databases">
        <authorList>
            <consortium name="NIH - Zebrafish Gene Collection (ZGC) project"/>
        </authorList>
    </citation>
    <scope>NUCLEOTIDE SEQUENCE [LARGE SCALE MRNA]</scope>
    <source>
        <tissue>Gill</tissue>
    </source>
</reference>
<sequence length="349" mass="39178">MSELRGKVQTVLGQIEPDQLGRTMTHEHLTMSFECSHVPPAPGDEGLSLAPIEMKHLHWLQQNPYSHHENLLLNQELEAVKEELLCYRKAGGGTIVENTTTGINRNLPALKQLAKETGVHVIAGAGYYVDVTHSEETRKMTVEKLTDVIVSEVLHGADGTDIRCGVIGEIGTSWPITESEKKVLQATAHAQTRLGCPVIIHPGRDNRAPVEVIRILQEAGGDISKTVMSHLDRSIYDHGELLEFARMGSYLEYDLFGTEVLNYQFNCNVDMPSDSQRVQSLKFLIQEGYEDRILIAHDIHTKHRLTKYGGHGFSHILKNIVPKMLSRGITQNQVDKILIENPKRWLTFK</sequence>
<proteinExistence type="evidence at transcript level"/>
<evidence type="ECO:0000250" key="1">
    <source>
        <dbReference type="UniProtKB" id="P45548"/>
    </source>
</evidence>
<evidence type="ECO:0000250" key="2">
    <source>
        <dbReference type="UniProtKB" id="Q60866"/>
    </source>
</evidence>
<evidence type="ECO:0000250" key="3">
    <source>
        <dbReference type="UniProtKB" id="Q96BW5"/>
    </source>
</evidence>
<evidence type="ECO:0000255" key="4">
    <source>
        <dbReference type="PROSITE-ProRule" id="PRU00679"/>
    </source>
</evidence>
<evidence type="ECO:0000305" key="5"/>
<comment type="function">
    <text evidence="2">N-acetyltaurine hydrolase that catalyzes the hydrolysis of N-acetyltaurine into taurine and acetate. PTER also acts on other N-acetyl amino acids (Met, Ile, Leu, Val) and N-propionyltaurine, but at lower rates.</text>
</comment>
<comment type="catalytic activity">
    <reaction evidence="3">
        <text>N-acetyltaurine + H2O = taurine + acetate</text>
        <dbReference type="Rhea" id="RHEA:81107"/>
        <dbReference type="ChEBI" id="CHEBI:15377"/>
        <dbReference type="ChEBI" id="CHEBI:30089"/>
        <dbReference type="ChEBI" id="CHEBI:133737"/>
        <dbReference type="ChEBI" id="CHEBI:507393"/>
    </reaction>
    <physiologicalReaction direction="left-to-right" evidence="3">
        <dbReference type="Rhea" id="RHEA:81108"/>
    </physiologicalReaction>
</comment>
<comment type="catalytic activity">
    <reaction evidence="2">
        <text>N-propanoyltaurine + H2O = propanoate + taurine</text>
        <dbReference type="Rhea" id="RHEA:81111"/>
        <dbReference type="ChEBI" id="CHEBI:15377"/>
        <dbReference type="ChEBI" id="CHEBI:17272"/>
        <dbReference type="ChEBI" id="CHEBI:231795"/>
        <dbReference type="ChEBI" id="CHEBI:507393"/>
    </reaction>
    <physiologicalReaction direction="left-to-right" evidence="2">
        <dbReference type="Rhea" id="RHEA:81112"/>
    </physiologicalReaction>
</comment>
<comment type="catalytic activity">
    <reaction evidence="2">
        <text>N-acetyl-L-methionine + H2O = L-methionine + acetate</text>
        <dbReference type="Rhea" id="RHEA:67440"/>
        <dbReference type="ChEBI" id="CHEBI:15377"/>
        <dbReference type="ChEBI" id="CHEBI:30089"/>
        <dbReference type="ChEBI" id="CHEBI:57844"/>
        <dbReference type="ChEBI" id="CHEBI:71670"/>
    </reaction>
    <physiologicalReaction direction="left-to-right" evidence="2">
        <dbReference type="Rhea" id="RHEA:67441"/>
    </physiologicalReaction>
</comment>
<comment type="catalytic activity">
    <reaction evidence="2">
        <text>N-acetyl-L-isoleucine + H2O = L-isoleucine + acetate</text>
        <dbReference type="Rhea" id="RHEA:81119"/>
        <dbReference type="ChEBI" id="CHEBI:15377"/>
        <dbReference type="ChEBI" id="CHEBI:30089"/>
        <dbReference type="ChEBI" id="CHEBI:58045"/>
        <dbReference type="ChEBI" id="CHEBI:133735"/>
    </reaction>
    <physiologicalReaction direction="left-to-right" evidence="2">
        <dbReference type="Rhea" id="RHEA:81120"/>
    </physiologicalReaction>
</comment>
<comment type="catalytic activity">
    <reaction evidence="2">
        <text>N-acetyl-L-leucine + H2O = L-leucine + acetate</text>
        <dbReference type="Rhea" id="RHEA:81115"/>
        <dbReference type="ChEBI" id="CHEBI:15377"/>
        <dbReference type="ChEBI" id="CHEBI:30089"/>
        <dbReference type="ChEBI" id="CHEBI:57427"/>
        <dbReference type="ChEBI" id="CHEBI:58270"/>
    </reaction>
    <physiologicalReaction direction="left-to-right" evidence="2">
        <dbReference type="Rhea" id="RHEA:81116"/>
    </physiologicalReaction>
</comment>
<comment type="catalytic activity">
    <reaction evidence="2">
        <text>N-acetyl-L-valine + H2O = L-valine + acetate</text>
        <dbReference type="Rhea" id="RHEA:81123"/>
        <dbReference type="ChEBI" id="CHEBI:15377"/>
        <dbReference type="ChEBI" id="CHEBI:30089"/>
        <dbReference type="ChEBI" id="CHEBI:57762"/>
        <dbReference type="ChEBI" id="CHEBI:133716"/>
    </reaction>
    <physiologicalReaction direction="left-to-right" evidence="2">
        <dbReference type="Rhea" id="RHEA:81124"/>
    </physiologicalReaction>
</comment>
<comment type="cofactor">
    <cofactor evidence="1">
        <name>a divalent metal cation</name>
        <dbReference type="ChEBI" id="CHEBI:60240"/>
    </cofactor>
    <text evidence="1">Binds 2 divalent metal cations per subunit.</text>
</comment>
<comment type="subcellular location">
    <subcellularLocation>
        <location evidence="2">Cytoplasm</location>
        <location evidence="2">Cytosol</location>
    </subcellularLocation>
</comment>
<comment type="similarity">
    <text evidence="4">Belongs to the metallo-dependent hydrolases superfamily. Phosphotriesterase family.</text>
</comment>
<comment type="sequence caution" evidence="5">
    <conflict type="erroneous initiation">
        <sequence resource="EMBL-CDS" id="CAM14163"/>
    </conflict>
</comment>